<sequence>MQQPRPIRRALLSVSDKAGIVEFAEALSQRGVELLSTGGTARLLADAGLPVTEVSDYTGFPEMMDGRVKTLHPKVHGGILGRRGQDDAIMGQHDIKPIDMVVVNLYPFAQTVARPNCSLEDAVENIDIGGPTMVRSAAKNHKDVAIVVKSSDYAAIITEMDNNDGSLQYTTRFDLAIKAFEHTAAYDSMIANYFGALVPAYHGDTEQPAGRFPRTLNLNYIKKQDMRYGENSHQQAAFYIEENVQEASVATAEQLQGKALSYNNIADTDAALECVKEFAEPACVIVKHANPCGVAIGDDILSAYERAYQTDPTSAFGGIIAFNRELDAATAQAIISRQFVEVIIAPSISQEARSLLAAKQNVRVLACGQWQQRIAALDFKRVNGGLLVQDRDLGMVSEGDLRVVSERQPTAQELRDALFCWKVAKFVKSNAIVYARDNMTIGIGAGQMSRVYSAKIAGIKAADEGLEVKGSAMASDAFFPFRDGIDAAAAVGISCVIQPGGSIRDDEVIAAANEHGIAMIFTDMRHFRH</sequence>
<reference key="1">
    <citation type="submission" date="2007-09" db="EMBL/GenBank/DDBJ databases">
        <title>Complete sequence of chromosome of Serratia proteamaculans 568.</title>
        <authorList>
            <consortium name="US DOE Joint Genome Institute"/>
            <person name="Copeland A."/>
            <person name="Lucas S."/>
            <person name="Lapidus A."/>
            <person name="Barry K."/>
            <person name="Glavina del Rio T."/>
            <person name="Dalin E."/>
            <person name="Tice H."/>
            <person name="Pitluck S."/>
            <person name="Chain P."/>
            <person name="Malfatti S."/>
            <person name="Shin M."/>
            <person name="Vergez L."/>
            <person name="Schmutz J."/>
            <person name="Larimer F."/>
            <person name="Land M."/>
            <person name="Hauser L."/>
            <person name="Kyrpides N."/>
            <person name="Kim E."/>
            <person name="Taghavi S."/>
            <person name="Newman L."/>
            <person name="Vangronsveld J."/>
            <person name="van der Lelie D."/>
            <person name="Richardson P."/>
        </authorList>
    </citation>
    <scope>NUCLEOTIDE SEQUENCE [LARGE SCALE GENOMIC DNA]</scope>
    <source>
        <strain>568</strain>
    </source>
</reference>
<protein>
    <recommendedName>
        <fullName evidence="1">Bifunctional purine biosynthesis protein PurH</fullName>
    </recommendedName>
    <domain>
        <recommendedName>
            <fullName evidence="1">Phosphoribosylaminoimidazolecarboxamide formyltransferase</fullName>
            <ecNumber evidence="1">2.1.2.3</ecNumber>
        </recommendedName>
        <alternativeName>
            <fullName evidence="1">AICAR transformylase</fullName>
        </alternativeName>
    </domain>
    <domain>
        <recommendedName>
            <fullName evidence="1">IMP cyclohydrolase</fullName>
            <ecNumber evidence="1">3.5.4.10</ecNumber>
        </recommendedName>
        <alternativeName>
            <fullName evidence="1">ATIC</fullName>
        </alternativeName>
        <alternativeName>
            <fullName evidence="1">IMP synthase</fullName>
        </alternativeName>
        <alternativeName>
            <fullName evidence="1">Inosinicase</fullName>
        </alternativeName>
    </domain>
</protein>
<evidence type="ECO:0000255" key="1">
    <source>
        <dbReference type="HAMAP-Rule" id="MF_00139"/>
    </source>
</evidence>
<evidence type="ECO:0000255" key="2">
    <source>
        <dbReference type="PROSITE-ProRule" id="PRU01202"/>
    </source>
</evidence>
<name>PUR9_SERP5</name>
<feature type="chain" id="PRO_1000057913" description="Bifunctional purine biosynthesis protein PurH">
    <location>
        <begin position="1"/>
        <end position="529"/>
    </location>
</feature>
<feature type="domain" description="MGS-like" evidence="2">
    <location>
        <begin position="1"/>
        <end position="148"/>
    </location>
</feature>
<proteinExistence type="inferred from homology"/>
<organism>
    <name type="scientific">Serratia proteamaculans (strain 568)</name>
    <dbReference type="NCBI Taxonomy" id="399741"/>
    <lineage>
        <taxon>Bacteria</taxon>
        <taxon>Pseudomonadati</taxon>
        <taxon>Pseudomonadota</taxon>
        <taxon>Gammaproteobacteria</taxon>
        <taxon>Enterobacterales</taxon>
        <taxon>Yersiniaceae</taxon>
        <taxon>Serratia</taxon>
    </lineage>
</organism>
<keyword id="KW-0378">Hydrolase</keyword>
<keyword id="KW-0511">Multifunctional enzyme</keyword>
<keyword id="KW-0658">Purine biosynthesis</keyword>
<keyword id="KW-0808">Transferase</keyword>
<dbReference type="EC" id="2.1.2.3" evidence="1"/>
<dbReference type="EC" id="3.5.4.10" evidence="1"/>
<dbReference type="EMBL" id="CP000826">
    <property type="protein sequence ID" value="ABV39403.1"/>
    <property type="molecule type" value="Genomic_DNA"/>
</dbReference>
<dbReference type="SMR" id="A8G8G3"/>
<dbReference type="STRING" id="399741.Spro_0293"/>
<dbReference type="KEGG" id="spe:Spro_0293"/>
<dbReference type="eggNOG" id="COG0138">
    <property type="taxonomic scope" value="Bacteria"/>
</dbReference>
<dbReference type="HOGENOM" id="CLU_016316_5_2_6"/>
<dbReference type="OrthoDB" id="9802065at2"/>
<dbReference type="UniPathway" id="UPA00074">
    <property type="reaction ID" value="UER00133"/>
</dbReference>
<dbReference type="UniPathway" id="UPA00074">
    <property type="reaction ID" value="UER00135"/>
</dbReference>
<dbReference type="GO" id="GO:0005829">
    <property type="term" value="C:cytosol"/>
    <property type="evidence" value="ECO:0007669"/>
    <property type="project" value="TreeGrafter"/>
</dbReference>
<dbReference type="GO" id="GO:0003937">
    <property type="term" value="F:IMP cyclohydrolase activity"/>
    <property type="evidence" value="ECO:0007669"/>
    <property type="project" value="UniProtKB-UniRule"/>
</dbReference>
<dbReference type="GO" id="GO:0004643">
    <property type="term" value="F:phosphoribosylaminoimidazolecarboxamide formyltransferase activity"/>
    <property type="evidence" value="ECO:0007669"/>
    <property type="project" value="UniProtKB-UniRule"/>
</dbReference>
<dbReference type="GO" id="GO:0006189">
    <property type="term" value="P:'de novo' IMP biosynthetic process"/>
    <property type="evidence" value="ECO:0007669"/>
    <property type="project" value="UniProtKB-UniRule"/>
</dbReference>
<dbReference type="CDD" id="cd01421">
    <property type="entry name" value="IMPCH"/>
    <property type="match status" value="1"/>
</dbReference>
<dbReference type="FunFam" id="3.40.140.20:FF:000001">
    <property type="entry name" value="Bifunctional purine biosynthesis protein PurH"/>
    <property type="match status" value="1"/>
</dbReference>
<dbReference type="FunFam" id="3.40.140.20:FF:000002">
    <property type="entry name" value="Bifunctional purine biosynthesis protein PurH"/>
    <property type="match status" value="1"/>
</dbReference>
<dbReference type="FunFam" id="3.40.50.1380:FF:000001">
    <property type="entry name" value="Bifunctional purine biosynthesis protein PurH"/>
    <property type="match status" value="1"/>
</dbReference>
<dbReference type="Gene3D" id="3.40.140.20">
    <property type="match status" value="2"/>
</dbReference>
<dbReference type="Gene3D" id="3.40.50.1380">
    <property type="entry name" value="Methylglyoxal synthase-like domain"/>
    <property type="match status" value="1"/>
</dbReference>
<dbReference type="HAMAP" id="MF_00139">
    <property type="entry name" value="PurH"/>
    <property type="match status" value="1"/>
</dbReference>
<dbReference type="InterPro" id="IPR024051">
    <property type="entry name" value="AICAR_Tfase_dup_dom_sf"/>
</dbReference>
<dbReference type="InterPro" id="IPR016193">
    <property type="entry name" value="Cytidine_deaminase-like"/>
</dbReference>
<dbReference type="InterPro" id="IPR011607">
    <property type="entry name" value="MGS-like_dom"/>
</dbReference>
<dbReference type="InterPro" id="IPR036914">
    <property type="entry name" value="MGS-like_dom_sf"/>
</dbReference>
<dbReference type="InterPro" id="IPR002695">
    <property type="entry name" value="PurH-like"/>
</dbReference>
<dbReference type="NCBIfam" id="NF002049">
    <property type="entry name" value="PRK00881.1"/>
    <property type="match status" value="1"/>
</dbReference>
<dbReference type="NCBIfam" id="TIGR00355">
    <property type="entry name" value="purH"/>
    <property type="match status" value="1"/>
</dbReference>
<dbReference type="PANTHER" id="PTHR11692:SF0">
    <property type="entry name" value="BIFUNCTIONAL PURINE BIOSYNTHESIS PROTEIN ATIC"/>
    <property type="match status" value="1"/>
</dbReference>
<dbReference type="PANTHER" id="PTHR11692">
    <property type="entry name" value="BIFUNCTIONAL PURINE BIOSYNTHESIS PROTEIN PURH"/>
    <property type="match status" value="1"/>
</dbReference>
<dbReference type="Pfam" id="PF01808">
    <property type="entry name" value="AICARFT_IMPCHas"/>
    <property type="match status" value="1"/>
</dbReference>
<dbReference type="Pfam" id="PF02142">
    <property type="entry name" value="MGS"/>
    <property type="match status" value="1"/>
</dbReference>
<dbReference type="PIRSF" id="PIRSF000414">
    <property type="entry name" value="AICARFT_IMPCHas"/>
    <property type="match status" value="1"/>
</dbReference>
<dbReference type="SMART" id="SM00798">
    <property type="entry name" value="AICARFT_IMPCHas"/>
    <property type="match status" value="1"/>
</dbReference>
<dbReference type="SMART" id="SM00851">
    <property type="entry name" value="MGS"/>
    <property type="match status" value="1"/>
</dbReference>
<dbReference type="SUPFAM" id="SSF53927">
    <property type="entry name" value="Cytidine deaminase-like"/>
    <property type="match status" value="1"/>
</dbReference>
<dbReference type="SUPFAM" id="SSF52335">
    <property type="entry name" value="Methylglyoxal synthase-like"/>
    <property type="match status" value="1"/>
</dbReference>
<dbReference type="PROSITE" id="PS51855">
    <property type="entry name" value="MGS"/>
    <property type="match status" value="1"/>
</dbReference>
<accession>A8G8G3</accession>
<gene>
    <name evidence="1" type="primary">purH</name>
    <name type="ordered locus">Spro_0293</name>
</gene>
<comment type="catalytic activity">
    <reaction evidence="1">
        <text>(6R)-10-formyltetrahydrofolate + 5-amino-1-(5-phospho-beta-D-ribosyl)imidazole-4-carboxamide = 5-formamido-1-(5-phospho-D-ribosyl)imidazole-4-carboxamide + (6S)-5,6,7,8-tetrahydrofolate</text>
        <dbReference type="Rhea" id="RHEA:22192"/>
        <dbReference type="ChEBI" id="CHEBI:57453"/>
        <dbReference type="ChEBI" id="CHEBI:58467"/>
        <dbReference type="ChEBI" id="CHEBI:58475"/>
        <dbReference type="ChEBI" id="CHEBI:195366"/>
        <dbReference type="EC" id="2.1.2.3"/>
    </reaction>
</comment>
<comment type="catalytic activity">
    <reaction evidence="1">
        <text>IMP + H2O = 5-formamido-1-(5-phospho-D-ribosyl)imidazole-4-carboxamide</text>
        <dbReference type="Rhea" id="RHEA:18445"/>
        <dbReference type="ChEBI" id="CHEBI:15377"/>
        <dbReference type="ChEBI" id="CHEBI:58053"/>
        <dbReference type="ChEBI" id="CHEBI:58467"/>
        <dbReference type="EC" id="3.5.4.10"/>
    </reaction>
</comment>
<comment type="pathway">
    <text evidence="1">Purine metabolism; IMP biosynthesis via de novo pathway; 5-formamido-1-(5-phospho-D-ribosyl)imidazole-4-carboxamide from 5-amino-1-(5-phospho-D-ribosyl)imidazole-4-carboxamide (10-formyl THF route): step 1/1.</text>
</comment>
<comment type="pathway">
    <text evidence="1">Purine metabolism; IMP biosynthesis via de novo pathway; IMP from 5-formamido-1-(5-phospho-D-ribosyl)imidazole-4-carboxamide: step 1/1.</text>
</comment>
<comment type="domain">
    <text evidence="1">The IMP cyclohydrolase activity resides in the N-terminal region.</text>
</comment>
<comment type="similarity">
    <text evidence="1">Belongs to the PurH family.</text>
</comment>